<proteinExistence type="evidence at protein level"/>
<organism>
    <name type="scientific">Neurospora crassa (strain ATCC 24698 / 74-OR23-1A / CBS 708.71 / DSM 1257 / FGSC 987)</name>
    <dbReference type="NCBI Taxonomy" id="367110"/>
    <lineage>
        <taxon>Eukaryota</taxon>
        <taxon>Fungi</taxon>
        <taxon>Dikarya</taxon>
        <taxon>Ascomycota</taxon>
        <taxon>Pezizomycotina</taxon>
        <taxon>Sordariomycetes</taxon>
        <taxon>Sordariomycetidae</taxon>
        <taxon>Sordariales</taxon>
        <taxon>Sordariaceae</taxon>
        <taxon>Neurospora</taxon>
    </lineage>
</organism>
<gene>
    <name type="primary">cr-1</name>
    <name type="synonym">nac</name>
    <name type="ORF">NCU08377</name>
</gene>
<comment type="function">
    <text evidence="7">Plays essential roles in regulation of cellular metabolism by catalyzing the synthesis of a second messenger, cAMP.</text>
</comment>
<comment type="catalytic activity">
    <reaction evidence="7">
        <text>ATP = 3',5'-cyclic AMP + diphosphate</text>
        <dbReference type="Rhea" id="RHEA:15389"/>
        <dbReference type="ChEBI" id="CHEBI:30616"/>
        <dbReference type="ChEBI" id="CHEBI:33019"/>
        <dbReference type="ChEBI" id="CHEBI:58165"/>
        <dbReference type="EC" id="4.6.1.1"/>
    </reaction>
</comment>
<comment type="cofactor">
    <cofactor evidence="1">
        <name>Mg(2+)</name>
        <dbReference type="ChEBI" id="CHEBI:18420"/>
    </cofactor>
    <text evidence="1">Binds 1 Mg(2+) ion per subunit.</text>
</comment>
<comment type="similarity">
    <text evidence="3">Belongs to the adenylyl cyclase class-4/guanylyl cyclase family.</text>
</comment>
<reference key="1">
    <citation type="journal article" date="1991" name="Jpn. J. Genet.">
        <title>Isolation and characterization of the adenylate cyclase structural gene of Neurospora crassa.</title>
        <authorList>
            <person name="Kore-Eda S."/>
            <person name="Murayama T."/>
            <person name="Uno I."/>
        </authorList>
    </citation>
    <scope>NUCLEOTIDE SEQUENCE [GENOMIC DNA]</scope>
    <scope>FUNCTION</scope>
    <scope>CATALYTIC ACTIVITY</scope>
</reference>
<reference key="2">
    <citation type="journal article" date="2003" name="Nature">
        <title>The genome sequence of the filamentous fungus Neurospora crassa.</title>
        <authorList>
            <person name="Galagan J.E."/>
            <person name="Calvo S.E."/>
            <person name="Borkovich K.A."/>
            <person name="Selker E.U."/>
            <person name="Read N.D."/>
            <person name="Jaffe D.B."/>
            <person name="FitzHugh W."/>
            <person name="Ma L.-J."/>
            <person name="Smirnov S."/>
            <person name="Purcell S."/>
            <person name="Rehman B."/>
            <person name="Elkins T."/>
            <person name="Engels R."/>
            <person name="Wang S."/>
            <person name="Nielsen C.B."/>
            <person name="Butler J."/>
            <person name="Endrizzi M."/>
            <person name="Qui D."/>
            <person name="Ianakiev P."/>
            <person name="Bell-Pedersen D."/>
            <person name="Nelson M.A."/>
            <person name="Werner-Washburne M."/>
            <person name="Selitrennikoff C.P."/>
            <person name="Kinsey J.A."/>
            <person name="Braun E.L."/>
            <person name="Zelter A."/>
            <person name="Schulte U."/>
            <person name="Kothe G.O."/>
            <person name="Jedd G."/>
            <person name="Mewes H.-W."/>
            <person name="Staben C."/>
            <person name="Marcotte E."/>
            <person name="Greenberg D."/>
            <person name="Roy A."/>
            <person name="Foley K."/>
            <person name="Naylor J."/>
            <person name="Stange-Thomann N."/>
            <person name="Barrett R."/>
            <person name="Gnerre S."/>
            <person name="Kamal M."/>
            <person name="Kamvysselis M."/>
            <person name="Mauceli E.W."/>
            <person name="Bielke C."/>
            <person name="Rudd S."/>
            <person name="Frishman D."/>
            <person name="Krystofova S."/>
            <person name="Rasmussen C."/>
            <person name="Metzenberg R.L."/>
            <person name="Perkins D.D."/>
            <person name="Kroken S."/>
            <person name="Cogoni C."/>
            <person name="Macino G."/>
            <person name="Catcheside D.E.A."/>
            <person name="Li W."/>
            <person name="Pratt R.J."/>
            <person name="Osmani S.A."/>
            <person name="DeSouza C.P.C."/>
            <person name="Glass N.L."/>
            <person name="Orbach M.J."/>
            <person name="Berglund J.A."/>
            <person name="Voelker R."/>
            <person name="Yarden O."/>
            <person name="Plamann M."/>
            <person name="Seiler S."/>
            <person name="Dunlap J.C."/>
            <person name="Radford A."/>
            <person name="Aramayo R."/>
            <person name="Natvig D.O."/>
            <person name="Alex L.A."/>
            <person name="Mannhaupt G."/>
            <person name="Ebbole D.J."/>
            <person name="Freitag M."/>
            <person name="Paulsen I."/>
            <person name="Sachs M.S."/>
            <person name="Lander E.S."/>
            <person name="Nusbaum C."/>
            <person name="Birren B.W."/>
        </authorList>
    </citation>
    <scope>NUCLEOTIDE SEQUENCE [LARGE SCALE GENOMIC DNA]</scope>
    <source>
        <strain>ATCC 24698 / 74-OR23-1A / CBS 708.71 / DSM 1257 / FGSC 987</strain>
    </source>
</reference>
<protein>
    <recommendedName>
        <fullName>Adenylate cyclase</fullName>
        <ecNumber evidence="7">4.6.1.1</ecNumber>
    </recommendedName>
    <alternativeName>
        <fullName>ATP pyrophosphate-lyase</fullName>
    </alternativeName>
    <alternativeName>
        <fullName>Adenylyl cyclase</fullName>
    </alternativeName>
    <alternativeName>
        <fullName>Crisp-1</fullName>
    </alternativeName>
</protein>
<accession>Q01631</accession>
<accession>Q7RVM0</accession>
<accession>V5IQU1</accession>
<sequence length="2300" mass="254772">MTRNDGGSRYSSIDSAQSSITAKPFPLTPTSSLGSSMTRPLSPSLQAGSSSSNGGHNVSRSASQGARRPAPTRLKTDDGTQFASRSSRDFESSQSQSQPSHTQTRSHSLSQATLQSCSQPQLSLNSQQSQSPSQYHSQQTPTQQQPQQQVSPTGGSRLTQSPTTPSNASIREHRMSELGGYRREMAAMLDTTGGALSRTSSHSQQQPQQPQQQQQQQQQQQGHAAGSVSGTFSNLSQYAPYLGGNNGGGMSMGSFLNDSTDNLSVISQLSPGIRPMTARPSQASAGSMEFPDSAYYDDERRPSIASITTTASSQGSRTSKTRGGLQKLQQFFGDRDDWPGRDSSEISLPQPSHSGPMSTGKEHRSHSYSLPGSGRSHRDRNYSNATDHHPSTFGSVSTVGGRDRDASPVPSRPRTPVPAPEVVPFLYQEADDIARYGEAPVRTSLTGPDRDRYIDSSQNPPKTSSSARSGHSIVHLPGHHKHNKSNEDPRALKPSLSREDSAASFARDFRNGSSSMMGTRSRAQSPAPSWTGTSRGLKANSISDGTSSPAPSHKKGILGRFRRHNKDKEDGSSLRSGSNHTLVHRPSRQDLTRAAESTYPASVYVSDPSEQREVPVRPGYVRQTTAPGFTTKLFTSKKSSSAKQPQDDMDEDIGPTDMHMGGGTVYHLDTNLNDMEGILTKPQPMTPLDNSISMRRESEKMIVPITTDPEGAWAAPDSWAVRDNKKSLAPQVNEDLCSRQPSEEKEKKSNYYIRVFRSDSTWTTLTLPLTATAEDVIMGVAKKTYLPPGAQDSYSLLIKKHDLFRVLNSAEQPLRIQKRLFQQIGYQEKDGIDEIGREDNSYICRWVFLKEKEADMHLLSPDINFRNQKLNHVDLSGRNLITIPVPLYRKAAEIVSLNLSRNLSLDVPRDFIQACTALRDIKYNNNEAQALPKSFATASKLTYLDVSNNRLQDLDHSELSKLTGLLKLNLANNCLRSLPPTLGAYKSLRTLNISSNFLDVFPSFICELETIVDLDLSFNSINNLPDNLMKLRNLEKFVITNNRLSGPISESVRDLVSLRELDIRYNQISTIDVLSDLPRLEILSADHNQISKFSGSFERLRSLKLNSNPIVKFEVKAPVPTLKILNLSNAQLASIDESIDNLMNLERLILDSNYFVSLPNQIGNLKKLDHLSMANNHLGELPPEIGCLTELRTLDVHGNNMRKLPNEIWWANKLEHLNASSNILTEFPKPASRAPQAPGEASPSPGAYPFPNANKNGLLSRTPSMDDLNGDASRRPSQASSTLLGVAVSPVPSGPDNRKSSMVSLYGKGGRKTSVVSRSTTQSSTGVITPSNGPRKDSSLSYRFTHTFSGSLKNLYLADNQLDDDVFEELKHLPELRVLNLSCNDLSDMPQGTIRSWPQLVELYLSGNELTSLPAEDFLEEHCLLQTLHINGNKFINLPAEISRAKKLQVLDCSSNNLKYNVTNVPYDWNWNFNRDLRYLNLSGNKRLEIKNNYRQPQSYRDDDFADTDFSKLTNLRVLGLMEVTHTLPNIPDQTEDRRVRTSEMKAGAYLPYGMADTLGKNEHLSLFDLVVPRLGSVETDTLVALFDGKELSTGGSKIAKFLYEEFSRLFILELEKVKGKPNENPADALRRTFLSVNKLLMSLSNSADERGLDSHPSRNYAHTVLTKEDLNSGCVATVAYLSELKLYVANVGDVQGMLIQANGSFKMLTKKHDPADPVERSRIRNAGGWVSRNGRLNDVLNVSRAFGYTELLPAVQAAPDITEHTIDDKDETVLIASKELWEHLRPELIVDVARECRSDLMKASQKLRDLAIAYGSTNKLLIMMIGVANLKQRQAQQFKGQLNATFSMPQDDPSHVPPSGNKRRKVRAEGPLDSNLMRLNAEVPPPTGQLSIVFTDIKNSTQLWENYPEAMRLAIKLHNEVMRRQLRMIGGFEVKTEGDAFMVSFPTATSALLWCFAVQMKLLTVDWPPEVLSNSSCQPIYDRNNNLITRGLSVRMGAHWGEPLAERDPVTRRMDYYGPMVNKASRISAVADGGQITASSDFITEIHRCLETYKESVDVDEDSLEDDATAKAIRAELRALSSQGFEVKDMGEKKLKGLENPELVYSVYPHALVGRTEQHHAHTESTQNQAALQPYGALATPKPATMDPDSEIQFEPETIWALWRVALRLEMLCSTLEEPNARGLQAPETELLERMKQRAGEVTDHFLLNFMEHQISRIETCITSLAVRHIAIGSGPITKLNDLRAPMNDVLSTLKEQMDELARYKAKYGSLDQAETDDATDNNSSGDVDTLDGSDTEQE</sequence>
<feature type="chain" id="PRO_0000195728" description="Adenylate cyclase">
    <location>
        <begin position="1"/>
        <end position="2300"/>
    </location>
</feature>
<feature type="domain" description="Ras-associating" evidence="4">
    <location>
        <begin position="749"/>
        <end position="841"/>
    </location>
</feature>
<feature type="repeat" description="LRR 1">
    <location>
        <begin position="867"/>
        <end position="890"/>
    </location>
</feature>
<feature type="repeat" description="LRR 2">
    <location>
        <begin position="892"/>
        <end position="914"/>
    </location>
</feature>
<feature type="repeat" description="LRR 3">
    <location>
        <begin position="915"/>
        <end position="938"/>
    </location>
</feature>
<feature type="repeat" description="LRR 4">
    <location>
        <begin position="939"/>
        <end position="961"/>
    </location>
</feature>
<feature type="repeat" description="LRR 5">
    <location>
        <begin position="962"/>
        <end position="986"/>
    </location>
</feature>
<feature type="repeat" description="LRR 6">
    <location>
        <begin position="988"/>
        <end position="1008"/>
    </location>
</feature>
<feature type="repeat" description="LRR 7">
    <location>
        <begin position="1009"/>
        <end position="1031"/>
    </location>
</feature>
<feature type="repeat" description="LRR 8">
    <location>
        <begin position="1033"/>
        <end position="1055"/>
    </location>
</feature>
<feature type="repeat" description="LRR 9">
    <location>
        <begin position="1056"/>
        <end position="1079"/>
    </location>
</feature>
<feature type="repeat" description="LRR 10">
    <location>
        <begin position="1081"/>
        <end position="1097"/>
    </location>
</feature>
<feature type="repeat" description="LRR 11">
    <location>
        <begin position="1098"/>
        <end position="1119"/>
    </location>
</feature>
<feature type="repeat" description="LRR 12">
    <location>
        <begin position="1120"/>
        <end position="1142"/>
    </location>
</feature>
<feature type="repeat" description="LRR 13">
    <location>
        <begin position="1143"/>
        <end position="1165"/>
    </location>
</feature>
<feature type="repeat" description="LRR 14">
    <location>
        <begin position="1166"/>
        <end position="1188"/>
    </location>
</feature>
<feature type="repeat" description="LRR 15">
    <location>
        <begin position="1189"/>
        <end position="1211"/>
    </location>
</feature>
<feature type="repeat" description="LRR 16">
    <location>
        <begin position="1213"/>
        <end position="1234"/>
    </location>
</feature>
<feature type="repeat" description="LRR 17">
    <location>
        <begin position="1349"/>
        <end position="1369"/>
    </location>
</feature>
<feature type="repeat" description="LRR 18">
    <location>
        <begin position="1373"/>
        <end position="1396"/>
    </location>
</feature>
<feature type="repeat" description="LRR 19">
    <location>
        <begin position="1398"/>
        <end position="1420"/>
    </location>
</feature>
<feature type="repeat" description="LRR 20">
    <location>
        <begin position="1422"/>
        <end position="1445"/>
    </location>
</feature>
<feature type="repeat" description="LRR 21">
    <location>
        <begin position="1447"/>
        <end position="1469"/>
    </location>
</feature>
<feature type="repeat" description="LRR 22">
    <location>
        <begin position="1474"/>
        <end position="1497"/>
    </location>
</feature>
<feature type="domain" description="PPM-type phosphatase" evidence="5">
    <location>
        <begin position="1552"/>
        <end position="1828"/>
    </location>
</feature>
<feature type="domain" description="Guanylate cyclase" evidence="3">
    <location>
        <begin position="1892"/>
        <end position="2029"/>
    </location>
</feature>
<feature type="region of interest" description="Disordered" evidence="6">
    <location>
        <begin position="1"/>
        <end position="256"/>
    </location>
</feature>
<feature type="region of interest" description="Disordered" evidence="6">
    <location>
        <begin position="272"/>
        <end position="593"/>
    </location>
</feature>
<feature type="region of interest" description="Disordered" evidence="6">
    <location>
        <begin position="631"/>
        <end position="652"/>
    </location>
</feature>
<feature type="region of interest" description="Disordered" evidence="6">
    <location>
        <begin position="1228"/>
        <end position="1336"/>
    </location>
</feature>
<feature type="region of interest" description="Disordered" evidence="6">
    <location>
        <begin position="1847"/>
        <end position="1867"/>
    </location>
</feature>
<feature type="region of interest" description="Disordered" evidence="6">
    <location>
        <begin position="2272"/>
        <end position="2300"/>
    </location>
</feature>
<feature type="compositionally biased region" description="Polar residues" evidence="6">
    <location>
        <begin position="1"/>
        <end position="21"/>
    </location>
</feature>
<feature type="compositionally biased region" description="Polar residues" evidence="6">
    <location>
        <begin position="28"/>
        <end position="41"/>
    </location>
</feature>
<feature type="compositionally biased region" description="Low complexity" evidence="6">
    <location>
        <begin position="42"/>
        <end position="61"/>
    </location>
</feature>
<feature type="compositionally biased region" description="Low complexity" evidence="6">
    <location>
        <begin position="92"/>
        <end position="152"/>
    </location>
</feature>
<feature type="compositionally biased region" description="Polar residues" evidence="6">
    <location>
        <begin position="153"/>
        <end position="169"/>
    </location>
</feature>
<feature type="compositionally biased region" description="Basic and acidic residues" evidence="6">
    <location>
        <begin position="170"/>
        <end position="185"/>
    </location>
</feature>
<feature type="compositionally biased region" description="Low complexity" evidence="6">
    <location>
        <begin position="204"/>
        <end position="221"/>
    </location>
</feature>
<feature type="compositionally biased region" description="Polar residues" evidence="6">
    <location>
        <begin position="228"/>
        <end position="237"/>
    </location>
</feature>
<feature type="compositionally biased region" description="Low complexity" evidence="6">
    <location>
        <begin position="303"/>
        <end position="313"/>
    </location>
</feature>
<feature type="compositionally biased region" description="Basic and acidic residues" evidence="6">
    <location>
        <begin position="333"/>
        <end position="344"/>
    </location>
</feature>
<feature type="compositionally biased region" description="Polar residues" evidence="6">
    <location>
        <begin position="345"/>
        <end position="357"/>
    </location>
</feature>
<feature type="compositionally biased region" description="Pro residues" evidence="6">
    <location>
        <begin position="410"/>
        <end position="421"/>
    </location>
</feature>
<feature type="compositionally biased region" description="Polar residues" evidence="6">
    <location>
        <begin position="455"/>
        <end position="469"/>
    </location>
</feature>
<feature type="compositionally biased region" description="Basic and acidic residues" evidence="6">
    <location>
        <begin position="484"/>
        <end position="501"/>
    </location>
</feature>
<feature type="compositionally biased region" description="Polar residues" evidence="6">
    <location>
        <begin position="511"/>
        <end position="550"/>
    </location>
</feature>
<feature type="compositionally biased region" description="Basic residues" evidence="6">
    <location>
        <begin position="552"/>
        <end position="565"/>
    </location>
</feature>
<feature type="compositionally biased region" description="Low complexity" evidence="6">
    <location>
        <begin position="631"/>
        <end position="643"/>
    </location>
</feature>
<feature type="compositionally biased region" description="Polar residues" evidence="6">
    <location>
        <begin position="1253"/>
        <end position="1263"/>
    </location>
</feature>
<feature type="compositionally biased region" description="Low complexity" evidence="6">
    <location>
        <begin position="1313"/>
        <end position="1327"/>
    </location>
</feature>
<feature type="compositionally biased region" description="Acidic residues" evidence="6">
    <location>
        <begin position="2290"/>
        <end position="2300"/>
    </location>
</feature>
<feature type="binding site" evidence="2">
    <location>
        <position position="1897"/>
    </location>
    <ligand>
        <name>Mg(2+)</name>
        <dbReference type="ChEBI" id="CHEBI:18420"/>
    </ligand>
</feature>
<feature type="binding site" evidence="2">
    <location>
        <position position="1940"/>
    </location>
    <ligand>
        <name>Mg(2+)</name>
        <dbReference type="ChEBI" id="CHEBI:18420"/>
    </ligand>
</feature>
<feature type="sequence conflict" description="In Ref. 1; BAA00755." evidence="8" ref="1">
    <original>L</original>
    <variation>V</variation>
    <location>
        <position position="968"/>
    </location>
</feature>
<feature type="sequence conflict" description="In Ref. 1; BAA00755." evidence="8" ref="1">
    <original>TLK</original>
    <variation>IPQ</variation>
    <location>
        <begin position="1121"/>
        <end position="1123"/>
    </location>
</feature>
<keyword id="KW-0067">ATP-binding</keyword>
<keyword id="KW-0115">cAMP biosynthesis</keyword>
<keyword id="KW-0433">Leucine-rich repeat</keyword>
<keyword id="KW-0456">Lyase</keyword>
<keyword id="KW-0460">Magnesium</keyword>
<keyword id="KW-0479">Metal-binding</keyword>
<keyword id="KW-0547">Nucleotide-binding</keyword>
<keyword id="KW-1185">Reference proteome</keyword>
<keyword id="KW-0677">Repeat</keyword>
<evidence type="ECO:0000250" key="1"/>
<evidence type="ECO:0000250" key="2">
    <source>
        <dbReference type="UniProtKB" id="Q99280"/>
    </source>
</evidence>
<evidence type="ECO:0000255" key="3">
    <source>
        <dbReference type="PROSITE-ProRule" id="PRU00099"/>
    </source>
</evidence>
<evidence type="ECO:0000255" key="4">
    <source>
        <dbReference type="PROSITE-ProRule" id="PRU00166"/>
    </source>
</evidence>
<evidence type="ECO:0000255" key="5">
    <source>
        <dbReference type="PROSITE-ProRule" id="PRU01082"/>
    </source>
</evidence>
<evidence type="ECO:0000256" key="6">
    <source>
        <dbReference type="SAM" id="MobiDB-lite"/>
    </source>
</evidence>
<evidence type="ECO:0000269" key="7">
    <source>
    </source>
</evidence>
<evidence type="ECO:0000305" key="8"/>
<dbReference type="EC" id="4.6.1.1" evidence="7"/>
<dbReference type="EMBL" id="D00909">
    <property type="protein sequence ID" value="BAA00755.1"/>
    <property type="molecule type" value="Genomic_DNA"/>
</dbReference>
<dbReference type="EMBL" id="CM002236">
    <property type="protein sequence ID" value="ESA44140.1"/>
    <property type="molecule type" value="Genomic_DNA"/>
</dbReference>
<dbReference type="RefSeq" id="XP_011393197.1">
    <property type="nucleotide sequence ID" value="XM_011394895.1"/>
</dbReference>
<dbReference type="SMR" id="Q01631"/>
<dbReference type="FunCoup" id="Q01631">
    <property type="interactions" value="422"/>
</dbReference>
<dbReference type="STRING" id="367110.Q01631"/>
<dbReference type="PaxDb" id="5141-EFNCRP00000006404"/>
<dbReference type="EnsemblFungi" id="ESA44140">
    <property type="protein sequence ID" value="ESA44140"/>
    <property type="gene ID" value="NCU08377"/>
</dbReference>
<dbReference type="GeneID" id="3881413"/>
<dbReference type="KEGG" id="ncr:NCU08377"/>
<dbReference type="VEuPathDB" id="FungiDB:NCU08377"/>
<dbReference type="HOGENOM" id="CLU_000430_4_0_1"/>
<dbReference type="InParanoid" id="Q01631"/>
<dbReference type="OMA" id="QQVGYEE"/>
<dbReference type="OrthoDB" id="2021138at2759"/>
<dbReference type="Proteomes" id="UP000001805">
    <property type="component" value="Chromosome 1, Linkage Group I"/>
</dbReference>
<dbReference type="GO" id="GO:0004016">
    <property type="term" value="F:adenylate cyclase activity"/>
    <property type="evidence" value="ECO:0007669"/>
    <property type="project" value="UniProtKB-EC"/>
</dbReference>
<dbReference type="GO" id="GO:0005524">
    <property type="term" value="F:ATP binding"/>
    <property type="evidence" value="ECO:0007669"/>
    <property type="project" value="UniProtKB-KW"/>
</dbReference>
<dbReference type="GO" id="GO:0000287">
    <property type="term" value="F:magnesium ion binding"/>
    <property type="evidence" value="ECO:0007669"/>
    <property type="project" value="InterPro"/>
</dbReference>
<dbReference type="GO" id="GO:0006171">
    <property type="term" value="P:cAMP biosynthetic process"/>
    <property type="evidence" value="ECO:0007669"/>
    <property type="project" value="UniProtKB-KW"/>
</dbReference>
<dbReference type="GO" id="GO:0035556">
    <property type="term" value="P:intracellular signal transduction"/>
    <property type="evidence" value="ECO:0000318"/>
    <property type="project" value="GO_Central"/>
</dbReference>
<dbReference type="CDD" id="cd07302">
    <property type="entry name" value="CHD"/>
    <property type="match status" value="1"/>
</dbReference>
<dbReference type="CDD" id="cd00143">
    <property type="entry name" value="PP2Cc"/>
    <property type="match status" value="1"/>
</dbReference>
<dbReference type="CDD" id="cd17214">
    <property type="entry name" value="RA_CYR1_like"/>
    <property type="match status" value="1"/>
</dbReference>
<dbReference type="FunFam" id="3.80.10.10:FF:000408">
    <property type="entry name" value="Adenylate cyclase"/>
    <property type="match status" value="1"/>
</dbReference>
<dbReference type="FunFam" id="3.80.10.10:FF:000428">
    <property type="entry name" value="Adenylate cyclase"/>
    <property type="match status" value="1"/>
</dbReference>
<dbReference type="FunFam" id="3.60.40.10:FF:000055">
    <property type="entry name" value="Adenylate cyclase AcyA"/>
    <property type="match status" value="1"/>
</dbReference>
<dbReference type="FunFam" id="3.80.10.10:FF:000220">
    <property type="entry name" value="Adenylate cyclase AcyA"/>
    <property type="match status" value="1"/>
</dbReference>
<dbReference type="FunFam" id="3.80.10.10:FF:000305">
    <property type="entry name" value="Adenylate cyclase AcyA"/>
    <property type="match status" value="1"/>
</dbReference>
<dbReference type="Gene3D" id="3.30.70.1230">
    <property type="entry name" value="Nucleotide cyclase"/>
    <property type="match status" value="1"/>
</dbReference>
<dbReference type="Gene3D" id="3.60.40.10">
    <property type="entry name" value="PPM-type phosphatase domain"/>
    <property type="match status" value="1"/>
</dbReference>
<dbReference type="Gene3D" id="3.80.10.10">
    <property type="entry name" value="Ribonuclease Inhibitor"/>
    <property type="match status" value="4"/>
</dbReference>
<dbReference type="InterPro" id="IPR001054">
    <property type="entry name" value="A/G_cyclase"/>
</dbReference>
<dbReference type="InterPro" id="IPR013716">
    <property type="entry name" value="Adenylate_cyclase_G-a-bd"/>
</dbReference>
<dbReference type="InterPro" id="IPR001611">
    <property type="entry name" value="Leu-rich_rpt"/>
</dbReference>
<dbReference type="InterPro" id="IPR003591">
    <property type="entry name" value="Leu-rich_rpt_typical-subtyp"/>
</dbReference>
<dbReference type="InterPro" id="IPR032675">
    <property type="entry name" value="LRR_dom_sf"/>
</dbReference>
<dbReference type="InterPro" id="IPR050216">
    <property type="entry name" value="LRR_domain-containing"/>
</dbReference>
<dbReference type="InterPro" id="IPR055414">
    <property type="entry name" value="LRR_R13L4/SHOC2-like"/>
</dbReference>
<dbReference type="InterPro" id="IPR029787">
    <property type="entry name" value="Nucleotide_cyclase"/>
</dbReference>
<dbReference type="InterPro" id="IPR036457">
    <property type="entry name" value="PPM-type-like_dom_sf"/>
</dbReference>
<dbReference type="InterPro" id="IPR001932">
    <property type="entry name" value="PPM-type_phosphatase-like_dom"/>
</dbReference>
<dbReference type="InterPro" id="IPR000159">
    <property type="entry name" value="RA_dom"/>
</dbReference>
<dbReference type="InterPro" id="IPR055071">
    <property type="entry name" value="RA_PHLPP-like"/>
</dbReference>
<dbReference type="PANTHER" id="PTHR48051">
    <property type="match status" value="1"/>
</dbReference>
<dbReference type="PANTHER" id="PTHR48051:SF1">
    <property type="entry name" value="RAS SUPPRESSOR PROTEIN 1"/>
    <property type="match status" value="1"/>
</dbReference>
<dbReference type="Pfam" id="PF08509">
    <property type="entry name" value="Ad_cyc_g-alpha"/>
    <property type="match status" value="1"/>
</dbReference>
<dbReference type="Pfam" id="PF00211">
    <property type="entry name" value="Guanylate_cyc"/>
    <property type="match status" value="1"/>
</dbReference>
<dbReference type="Pfam" id="PF23598">
    <property type="entry name" value="LRR_14"/>
    <property type="match status" value="1"/>
</dbReference>
<dbReference type="Pfam" id="PF13855">
    <property type="entry name" value="LRR_8"/>
    <property type="match status" value="1"/>
</dbReference>
<dbReference type="Pfam" id="PF00481">
    <property type="entry name" value="PP2C"/>
    <property type="match status" value="1"/>
</dbReference>
<dbReference type="Pfam" id="PF23010">
    <property type="entry name" value="RA_3"/>
    <property type="match status" value="1"/>
</dbReference>
<dbReference type="SMART" id="SM00789">
    <property type="entry name" value="Ad_cyc_g-alpha"/>
    <property type="match status" value="1"/>
</dbReference>
<dbReference type="SMART" id="SM00044">
    <property type="entry name" value="CYCc"/>
    <property type="match status" value="1"/>
</dbReference>
<dbReference type="SMART" id="SM00364">
    <property type="entry name" value="LRR_BAC"/>
    <property type="match status" value="13"/>
</dbReference>
<dbReference type="SMART" id="SM00365">
    <property type="entry name" value="LRR_SD22"/>
    <property type="match status" value="5"/>
</dbReference>
<dbReference type="SMART" id="SM00369">
    <property type="entry name" value="LRR_TYP"/>
    <property type="match status" value="12"/>
</dbReference>
<dbReference type="SMART" id="SM00332">
    <property type="entry name" value="PP2Cc"/>
    <property type="match status" value="1"/>
</dbReference>
<dbReference type="SMART" id="SM00314">
    <property type="entry name" value="RA"/>
    <property type="match status" value="1"/>
</dbReference>
<dbReference type="SUPFAM" id="SSF52058">
    <property type="entry name" value="L domain-like"/>
    <property type="match status" value="2"/>
</dbReference>
<dbReference type="SUPFAM" id="SSF55073">
    <property type="entry name" value="Nucleotide cyclase"/>
    <property type="match status" value="1"/>
</dbReference>
<dbReference type="SUPFAM" id="SSF81606">
    <property type="entry name" value="PP2C-like"/>
    <property type="match status" value="1"/>
</dbReference>
<dbReference type="PROSITE" id="PS50125">
    <property type="entry name" value="GUANYLATE_CYCLASE_2"/>
    <property type="match status" value="1"/>
</dbReference>
<dbReference type="PROSITE" id="PS51450">
    <property type="entry name" value="LRR"/>
    <property type="match status" value="17"/>
</dbReference>
<dbReference type="PROSITE" id="PS51746">
    <property type="entry name" value="PPM_2"/>
    <property type="match status" value="1"/>
</dbReference>
<dbReference type="PROSITE" id="PS50200">
    <property type="entry name" value="RA"/>
    <property type="match status" value="1"/>
</dbReference>
<name>CYAA_NEUCR</name>